<sequence length="686" mass="76459">MTARRILVTSALPYANGQIHIGHLVEYIQTDIWVRFQRMMGNEVYYVGADDTHGTPVMLRAEKEGITPKALIDRVWTEHKRDFDSFLVSFDNYYSTDAEENRELCEKIYLALKAEDLIAEREVEQFFDPVKNMFLPDRFIKGECPKCGAKDQYGDSCEVCGTTYVPTDLKNPYSVVSGATPVRKSSAHYFFKLSDPRCETFLREWVADLAQPEAANKMQEWLGAEGEASTLSDWDISRDAPYFGFEIPGAPGKYFYVWLDAPIGYYASFQNLAAKKGIDFDAWVGPHSTAEQYHFIGKDILYFHTLFWPAMLRFSGYRTPTNVFAHGFLTVDGAKMSKSRGTFITAQSYVDTGMNPEWLRYYFAAKLNASMEDLDLNLDDFIARVNSDLIGKYVNIASRAAGFLVKRFEGKVDEAALAHPLLEQLRQAAPQVAHLYEAREYSKALRLVMELTDAVNAFVDTEKPWELAKDENKRAALHAACSVSLEAFRLLTVYLKPVVPNVAAGVERFLNVEPLDWRAIDKQLSAASPVQAYQHLMTRVDAKQVDALLAANRESLQATAAPAAAGAAIEPIADTITIDDFAKVDLRVAKIVECQKVEGSNKLLQLTLDLGEGRTRNVFSGIQSAYTPEQLVGKLTVVVANLAPRKMKFGVSEGMVLAASAADEKATPGLYILEPHEGAVPGMRIG</sequence>
<keyword id="KW-0030">Aminoacyl-tRNA synthetase</keyword>
<keyword id="KW-0067">ATP-binding</keyword>
<keyword id="KW-0963">Cytoplasm</keyword>
<keyword id="KW-0436">Ligase</keyword>
<keyword id="KW-0479">Metal-binding</keyword>
<keyword id="KW-0547">Nucleotide-binding</keyword>
<keyword id="KW-0648">Protein biosynthesis</keyword>
<keyword id="KW-1185">Reference proteome</keyword>
<keyword id="KW-0694">RNA-binding</keyword>
<keyword id="KW-0820">tRNA-binding</keyword>
<keyword id="KW-0862">Zinc</keyword>
<organism>
    <name type="scientific">Cupriavidus necator (strain ATCC 17699 / DSM 428 / KCTC 22496 / NCIMB 10442 / H16 / Stanier 337)</name>
    <name type="common">Ralstonia eutropha</name>
    <dbReference type="NCBI Taxonomy" id="381666"/>
    <lineage>
        <taxon>Bacteria</taxon>
        <taxon>Pseudomonadati</taxon>
        <taxon>Pseudomonadota</taxon>
        <taxon>Betaproteobacteria</taxon>
        <taxon>Burkholderiales</taxon>
        <taxon>Burkholderiaceae</taxon>
        <taxon>Cupriavidus</taxon>
    </lineage>
</organism>
<name>SYM_CUPNH</name>
<comment type="function">
    <text evidence="1">Is required not only for elongation of protein synthesis but also for the initiation of all mRNA translation through initiator tRNA(fMet) aminoacylation.</text>
</comment>
<comment type="catalytic activity">
    <reaction evidence="1">
        <text>tRNA(Met) + L-methionine + ATP = L-methionyl-tRNA(Met) + AMP + diphosphate</text>
        <dbReference type="Rhea" id="RHEA:13481"/>
        <dbReference type="Rhea" id="RHEA-COMP:9667"/>
        <dbReference type="Rhea" id="RHEA-COMP:9698"/>
        <dbReference type="ChEBI" id="CHEBI:30616"/>
        <dbReference type="ChEBI" id="CHEBI:33019"/>
        <dbReference type="ChEBI" id="CHEBI:57844"/>
        <dbReference type="ChEBI" id="CHEBI:78442"/>
        <dbReference type="ChEBI" id="CHEBI:78530"/>
        <dbReference type="ChEBI" id="CHEBI:456215"/>
        <dbReference type="EC" id="6.1.1.10"/>
    </reaction>
</comment>
<comment type="cofactor">
    <cofactor evidence="1">
        <name>Zn(2+)</name>
        <dbReference type="ChEBI" id="CHEBI:29105"/>
    </cofactor>
    <text evidence="1">Binds 1 zinc ion per subunit.</text>
</comment>
<comment type="subunit">
    <text evidence="1">Homodimer.</text>
</comment>
<comment type="subcellular location">
    <subcellularLocation>
        <location evidence="1">Cytoplasm</location>
    </subcellularLocation>
</comment>
<comment type="similarity">
    <text evidence="1">Belongs to the class-I aminoacyl-tRNA synthetase family. MetG type 1 subfamily.</text>
</comment>
<feature type="chain" id="PRO_0000331882" description="Methionine--tRNA ligase">
    <location>
        <begin position="1"/>
        <end position="686"/>
    </location>
</feature>
<feature type="domain" description="tRNA-binding" evidence="1">
    <location>
        <begin position="580"/>
        <end position="686"/>
    </location>
</feature>
<feature type="short sequence motif" description="'HIGH' region">
    <location>
        <begin position="13"/>
        <end position="23"/>
    </location>
</feature>
<feature type="short sequence motif" description="'KMSKS' region">
    <location>
        <begin position="335"/>
        <end position="339"/>
    </location>
</feature>
<feature type="binding site" evidence="1">
    <location>
        <position position="144"/>
    </location>
    <ligand>
        <name>Zn(2+)</name>
        <dbReference type="ChEBI" id="CHEBI:29105"/>
    </ligand>
</feature>
<feature type="binding site" evidence="1">
    <location>
        <position position="147"/>
    </location>
    <ligand>
        <name>Zn(2+)</name>
        <dbReference type="ChEBI" id="CHEBI:29105"/>
    </ligand>
</feature>
<feature type="binding site" evidence="1">
    <location>
        <position position="157"/>
    </location>
    <ligand>
        <name>Zn(2+)</name>
        <dbReference type="ChEBI" id="CHEBI:29105"/>
    </ligand>
</feature>
<feature type="binding site" evidence="1">
    <location>
        <position position="160"/>
    </location>
    <ligand>
        <name>Zn(2+)</name>
        <dbReference type="ChEBI" id="CHEBI:29105"/>
    </ligand>
</feature>
<feature type="binding site" evidence="1">
    <location>
        <position position="338"/>
    </location>
    <ligand>
        <name>ATP</name>
        <dbReference type="ChEBI" id="CHEBI:30616"/>
    </ligand>
</feature>
<accession>Q0K7K0</accession>
<dbReference type="EC" id="6.1.1.10" evidence="1"/>
<dbReference type="EMBL" id="AM260479">
    <property type="protein sequence ID" value="CAJ94021.1"/>
    <property type="molecule type" value="Genomic_DNA"/>
</dbReference>
<dbReference type="RefSeq" id="WP_011615922.1">
    <property type="nucleotide sequence ID" value="NC_008313.1"/>
</dbReference>
<dbReference type="SMR" id="Q0K7K0"/>
<dbReference type="STRING" id="381666.H16_A2945"/>
<dbReference type="KEGG" id="reh:H16_A2945"/>
<dbReference type="PATRIC" id="fig|381666.6.peg.3342"/>
<dbReference type="eggNOG" id="COG0073">
    <property type="taxonomic scope" value="Bacteria"/>
</dbReference>
<dbReference type="eggNOG" id="COG0143">
    <property type="taxonomic scope" value="Bacteria"/>
</dbReference>
<dbReference type="HOGENOM" id="CLU_009710_7_0_4"/>
<dbReference type="OrthoDB" id="9810191at2"/>
<dbReference type="Proteomes" id="UP000008210">
    <property type="component" value="Chromosome 1"/>
</dbReference>
<dbReference type="GO" id="GO:0005829">
    <property type="term" value="C:cytosol"/>
    <property type="evidence" value="ECO:0007669"/>
    <property type="project" value="TreeGrafter"/>
</dbReference>
<dbReference type="GO" id="GO:0005524">
    <property type="term" value="F:ATP binding"/>
    <property type="evidence" value="ECO:0007669"/>
    <property type="project" value="UniProtKB-UniRule"/>
</dbReference>
<dbReference type="GO" id="GO:0046872">
    <property type="term" value="F:metal ion binding"/>
    <property type="evidence" value="ECO:0007669"/>
    <property type="project" value="UniProtKB-KW"/>
</dbReference>
<dbReference type="GO" id="GO:0004825">
    <property type="term" value="F:methionine-tRNA ligase activity"/>
    <property type="evidence" value="ECO:0007669"/>
    <property type="project" value="UniProtKB-UniRule"/>
</dbReference>
<dbReference type="GO" id="GO:0000049">
    <property type="term" value="F:tRNA binding"/>
    <property type="evidence" value="ECO:0007669"/>
    <property type="project" value="UniProtKB-KW"/>
</dbReference>
<dbReference type="GO" id="GO:0006431">
    <property type="term" value="P:methionyl-tRNA aminoacylation"/>
    <property type="evidence" value="ECO:0007669"/>
    <property type="project" value="UniProtKB-UniRule"/>
</dbReference>
<dbReference type="CDD" id="cd07957">
    <property type="entry name" value="Anticodon_Ia_Met"/>
    <property type="match status" value="1"/>
</dbReference>
<dbReference type="CDD" id="cd00814">
    <property type="entry name" value="MetRS_core"/>
    <property type="match status" value="1"/>
</dbReference>
<dbReference type="CDD" id="cd02800">
    <property type="entry name" value="tRNA_bind_EcMetRS_like"/>
    <property type="match status" value="1"/>
</dbReference>
<dbReference type="FunFam" id="2.20.28.20:FF:000001">
    <property type="entry name" value="Methionine--tRNA ligase"/>
    <property type="match status" value="1"/>
</dbReference>
<dbReference type="FunFam" id="2.40.50.140:FF:000042">
    <property type="entry name" value="Methionine--tRNA ligase"/>
    <property type="match status" value="1"/>
</dbReference>
<dbReference type="Gene3D" id="3.40.50.620">
    <property type="entry name" value="HUPs"/>
    <property type="match status" value="1"/>
</dbReference>
<dbReference type="Gene3D" id="1.10.730.10">
    <property type="entry name" value="Isoleucyl-tRNA Synthetase, Domain 1"/>
    <property type="match status" value="1"/>
</dbReference>
<dbReference type="Gene3D" id="2.20.28.20">
    <property type="entry name" value="Methionyl-tRNA synthetase, Zn-domain"/>
    <property type="match status" value="1"/>
</dbReference>
<dbReference type="Gene3D" id="2.40.50.140">
    <property type="entry name" value="Nucleic acid-binding proteins"/>
    <property type="match status" value="1"/>
</dbReference>
<dbReference type="HAMAP" id="MF_00098">
    <property type="entry name" value="Met_tRNA_synth_type1"/>
    <property type="match status" value="1"/>
</dbReference>
<dbReference type="InterPro" id="IPR001412">
    <property type="entry name" value="aa-tRNA-synth_I_CS"/>
</dbReference>
<dbReference type="InterPro" id="IPR041872">
    <property type="entry name" value="Anticodon_Met"/>
</dbReference>
<dbReference type="InterPro" id="IPR004495">
    <property type="entry name" value="Met-tRNA-synth_bsu_C"/>
</dbReference>
<dbReference type="InterPro" id="IPR023458">
    <property type="entry name" value="Met-tRNA_ligase_1"/>
</dbReference>
<dbReference type="InterPro" id="IPR014758">
    <property type="entry name" value="Met-tRNA_synth"/>
</dbReference>
<dbReference type="InterPro" id="IPR015413">
    <property type="entry name" value="Methionyl/Leucyl_tRNA_Synth"/>
</dbReference>
<dbReference type="InterPro" id="IPR033911">
    <property type="entry name" value="MetRS_core"/>
</dbReference>
<dbReference type="InterPro" id="IPR029038">
    <property type="entry name" value="MetRS_Zn"/>
</dbReference>
<dbReference type="InterPro" id="IPR012340">
    <property type="entry name" value="NA-bd_OB-fold"/>
</dbReference>
<dbReference type="InterPro" id="IPR014729">
    <property type="entry name" value="Rossmann-like_a/b/a_fold"/>
</dbReference>
<dbReference type="InterPro" id="IPR002547">
    <property type="entry name" value="tRNA-bd_dom"/>
</dbReference>
<dbReference type="InterPro" id="IPR009080">
    <property type="entry name" value="tRNAsynth_Ia_anticodon-bd"/>
</dbReference>
<dbReference type="NCBIfam" id="TIGR00398">
    <property type="entry name" value="metG"/>
    <property type="match status" value="1"/>
</dbReference>
<dbReference type="NCBIfam" id="TIGR00399">
    <property type="entry name" value="metG_C_term"/>
    <property type="match status" value="1"/>
</dbReference>
<dbReference type="NCBIfam" id="NF001100">
    <property type="entry name" value="PRK00133.1"/>
    <property type="match status" value="1"/>
</dbReference>
<dbReference type="PANTHER" id="PTHR45765">
    <property type="entry name" value="METHIONINE--TRNA LIGASE"/>
    <property type="match status" value="1"/>
</dbReference>
<dbReference type="PANTHER" id="PTHR45765:SF1">
    <property type="entry name" value="METHIONINE--TRNA LIGASE, CYTOPLASMIC"/>
    <property type="match status" value="1"/>
</dbReference>
<dbReference type="Pfam" id="PF19303">
    <property type="entry name" value="Anticodon_3"/>
    <property type="match status" value="1"/>
</dbReference>
<dbReference type="Pfam" id="PF09334">
    <property type="entry name" value="tRNA-synt_1g"/>
    <property type="match status" value="1"/>
</dbReference>
<dbReference type="Pfam" id="PF01588">
    <property type="entry name" value="tRNA_bind"/>
    <property type="match status" value="1"/>
</dbReference>
<dbReference type="PRINTS" id="PR01041">
    <property type="entry name" value="TRNASYNTHMET"/>
</dbReference>
<dbReference type="SUPFAM" id="SSF47323">
    <property type="entry name" value="Anticodon-binding domain of a subclass of class I aminoacyl-tRNA synthetases"/>
    <property type="match status" value="1"/>
</dbReference>
<dbReference type="SUPFAM" id="SSF57770">
    <property type="entry name" value="Methionyl-tRNA synthetase (MetRS), Zn-domain"/>
    <property type="match status" value="1"/>
</dbReference>
<dbReference type="SUPFAM" id="SSF50249">
    <property type="entry name" value="Nucleic acid-binding proteins"/>
    <property type="match status" value="1"/>
</dbReference>
<dbReference type="SUPFAM" id="SSF52374">
    <property type="entry name" value="Nucleotidylyl transferase"/>
    <property type="match status" value="1"/>
</dbReference>
<dbReference type="PROSITE" id="PS00178">
    <property type="entry name" value="AA_TRNA_LIGASE_I"/>
    <property type="match status" value="1"/>
</dbReference>
<dbReference type="PROSITE" id="PS50886">
    <property type="entry name" value="TRBD"/>
    <property type="match status" value="1"/>
</dbReference>
<protein>
    <recommendedName>
        <fullName evidence="1">Methionine--tRNA ligase</fullName>
        <ecNumber evidence="1">6.1.1.10</ecNumber>
    </recommendedName>
    <alternativeName>
        <fullName evidence="1">Methionyl-tRNA synthetase</fullName>
        <shortName evidence="1">MetRS</shortName>
    </alternativeName>
</protein>
<gene>
    <name evidence="1" type="primary">metG</name>
    <name type="ordered locus">H16_A2945</name>
</gene>
<proteinExistence type="inferred from homology"/>
<reference key="1">
    <citation type="journal article" date="2006" name="Nat. Biotechnol.">
        <title>Genome sequence of the bioplastic-producing 'Knallgas' bacterium Ralstonia eutropha H16.</title>
        <authorList>
            <person name="Pohlmann A."/>
            <person name="Fricke W.F."/>
            <person name="Reinecke F."/>
            <person name="Kusian B."/>
            <person name="Liesegang H."/>
            <person name="Cramm R."/>
            <person name="Eitinger T."/>
            <person name="Ewering C."/>
            <person name="Poetter M."/>
            <person name="Schwartz E."/>
            <person name="Strittmatter A."/>
            <person name="Voss I."/>
            <person name="Gottschalk G."/>
            <person name="Steinbuechel A."/>
            <person name="Friedrich B."/>
            <person name="Bowien B."/>
        </authorList>
    </citation>
    <scope>NUCLEOTIDE SEQUENCE [LARGE SCALE GENOMIC DNA]</scope>
    <source>
        <strain>ATCC 17699 / DSM 428 / KCTC 22496 / NCIMB 10442 / H16 / Stanier 337</strain>
    </source>
</reference>
<evidence type="ECO:0000255" key="1">
    <source>
        <dbReference type="HAMAP-Rule" id="MF_00098"/>
    </source>
</evidence>